<name>KAD_COXB2</name>
<reference key="1">
    <citation type="journal article" date="2009" name="Infect. Immun.">
        <title>Comparative genomics reveal extensive transposon-mediated genomic plasticity and diversity among potential effector proteins within the genus Coxiella.</title>
        <authorList>
            <person name="Beare P.A."/>
            <person name="Unsworth N."/>
            <person name="Andoh M."/>
            <person name="Voth D.E."/>
            <person name="Omsland A."/>
            <person name="Gilk S.D."/>
            <person name="Williams K.P."/>
            <person name="Sobral B.W."/>
            <person name="Kupko J.J. III"/>
            <person name="Porcella S.F."/>
            <person name="Samuel J.E."/>
            <person name="Heinzen R.A."/>
        </authorList>
    </citation>
    <scope>NUCLEOTIDE SEQUENCE [LARGE SCALE GENOMIC DNA]</scope>
    <source>
        <strain>CbuG_Q212</strain>
    </source>
</reference>
<organism>
    <name type="scientific">Coxiella burnetii (strain CbuG_Q212)</name>
    <name type="common">Coxiella burnetii (strain Q212)</name>
    <dbReference type="NCBI Taxonomy" id="434923"/>
    <lineage>
        <taxon>Bacteria</taxon>
        <taxon>Pseudomonadati</taxon>
        <taxon>Pseudomonadota</taxon>
        <taxon>Gammaproteobacteria</taxon>
        <taxon>Legionellales</taxon>
        <taxon>Coxiellaceae</taxon>
        <taxon>Coxiella</taxon>
    </lineage>
</organism>
<gene>
    <name evidence="1" type="primary">adk</name>
    <name type="ordered locus">CbuG_1557</name>
</gene>
<sequence>MPLRIILLGLPGAGKGTQADFIAKHLDIPKISTGDMLRAAVKAKTPLGLEVKKIMESGGLVSDEIMIALVKERVKLPDCHKGYLLDGFPRTLAQADALNAAAIKIDLVIEIDVPEEEIIERMTGRLIHPASGRTYHRRYNPPKVADKDDVTGEPLIQRADDREETVRHRLAVYRKQTSPLSDYYAQWEKSGDPQAPKYFRISGLGSMEEVRERILQVFEAYDPRDSGNLEH</sequence>
<protein>
    <recommendedName>
        <fullName evidence="1">Adenylate kinase</fullName>
        <shortName evidence="1">AK</shortName>
        <ecNumber evidence="1">2.7.4.3</ecNumber>
    </recommendedName>
    <alternativeName>
        <fullName evidence="1">ATP-AMP transphosphorylase</fullName>
    </alternativeName>
    <alternativeName>
        <fullName evidence="1">ATP:AMP phosphotransferase</fullName>
    </alternativeName>
    <alternativeName>
        <fullName evidence="1">Adenylate monophosphate kinase</fullName>
    </alternativeName>
</protein>
<keyword id="KW-0067">ATP-binding</keyword>
<keyword id="KW-0963">Cytoplasm</keyword>
<keyword id="KW-0418">Kinase</keyword>
<keyword id="KW-0545">Nucleotide biosynthesis</keyword>
<keyword id="KW-0547">Nucleotide-binding</keyword>
<keyword id="KW-0808">Transferase</keyword>
<evidence type="ECO:0000255" key="1">
    <source>
        <dbReference type="HAMAP-Rule" id="MF_00235"/>
    </source>
</evidence>
<accession>B6J1M3</accession>
<dbReference type="EC" id="2.7.4.3" evidence="1"/>
<dbReference type="EMBL" id="CP001019">
    <property type="protein sequence ID" value="ACJ18851.1"/>
    <property type="molecule type" value="Genomic_DNA"/>
</dbReference>
<dbReference type="RefSeq" id="WP_005771364.1">
    <property type="nucleotide sequence ID" value="NC_011527.1"/>
</dbReference>
<dbReference type="SMR" id="B6J1M3"/>
<dbReference type="KEGG" id="cbg:CbuG_1557"/>
<dbReference type="HOGENOM" id="CLU_032354_1_2_6"/>
<dbReference type="UniPathway" id="UPA00588">
    <property type="reaction ID" value="UER00649"/>
</dbReference>
<dbReference type="GO" id="GO:0005737">
    <property type="term" value="C:cytoplasm"/>
    <property type="evidence" value="ECO:0007669"/>
    <property type="project" value="UniProtKB-SubCell"/>
</dbReference>
<dbReference type="GO" id="GO:0004017">
    <property type="term" value="F:adenylate kinase activity"/>
    <property type="evidence" value="ECO:0007669"/>
    <property type="project" value="UniProtKB-UniRule"/>
</dbReference>
<dbReference type="GO" id="GO:0005524">
    <property type="term" value="F:ATP binding"/>
    <property type="evidence" value="ECO:0007669"/>
    <property type="project" value="UniProtKB-UniRule"/>
</dbReference>
<dbReference type="GO" id="GO:0044209">
    <property type="term" value="P:AMP salvage"/>
    <property type="evidence" value="ECO:0007669"/>
    <property type="project" value="UniProtKB-UniRule"/>
</dbReference>
<dbReference type="CDD" id="cd01428">
    <property type="entry name" value="ADK"/>
    <property type="match status" value="1"/>
</dbReference>
<dbReference type="FunFam" id="3.40.50.300:FF:000106">
    <property type="entry name" value="Adenylate kinase mitochondrial"/>
    <property type="match status" value="1"/>
</dbReference>
<dbReference type="Gene3D" id="3.40.50.300">
    <property type="entry name" value="P-loop containing nucleotide triphosphate hydrolases"/>
    <property type="match status" value="1"/>
</dbReference>
<dbReference type="HAMAP" id="MF_00235">
    <property type="entry name" value="Adenylate_kinase_Adk"/>
    <property type="match status" value="1"/>
</dbReference>
<dbReference type="InterPro" id="IPR006259">
    <property type="entry name" value="Adenyl_kin_sub"/>
</dbReference>
<dbReference type="InterPro" id="IPR000850">
    <property type="entry name" value="Adenylat/UMP-CMP_kin"/>
</dbReference>
<dbReference type="InterPro" id="IPR033690">
    <property type="entry name" value="Adenylat_kinase_CS"/>
</dbReference>
<dbReference type="InterPro" id="IPR007862">
    <property type="entry name" value="Adenylate_kinase_lid-dom"/>
</dbReference>
<dbReference type="InterPro" id="IPR027417">
    <property type="entry name" value="P-loop_NTPase"/>
</dbReference>
<dbReference type="NCBIfam" id="TIGR01351">
    <property type="entry name" value="adk"/>
    <property type="match status" value="1"/>
</dbReference>
<dbReference type="NCBIfam" id="NF001379">
    <property type="entry name" value="PRK00279.1-1"/>
    <property type="match status" value="1"/>
</dbReference>
<dbReference type="NCBIfam" id="NF001380">
    <property type="entry name" value="PRK00279.1-2"/>
    <property type="match status" value="1"/>
</dbReference>
<dbReference type="NCBIfam" id="NF001381">
    <property type="entry name" value="PRK00279.1-3"/>
    <property type="match status" value="1"/>
</dbReference>
<dbReference type="NCBIfam" id="NF011100">
    <property type="entry name" value="PRK14527.1"/>
    <property type="match status" value="1"/>
</dbReference>
<dbReference type="PANTHER" id="PTHR23359">
    <property type="entry name" value="NUCLEOTIDE KINASE"/>
    <property type="match status" value="1"/>
</dbReference>
<dbReference type="Pfam" id="PF00406">
    <property type="entry name" value="ADK"/>
    <property type="match status" value="1"/>
</dbReference>
<dbReference type="Pfam" id="PF05191">
    <property type="entry name" value="ADK_lid"/>
    <property type="match status" value="1"/>
</dbReference>
<dbReference type="PRINTS" id="PR00094">
    <property type="entry name" value="ADENYLTKNASE"/>
</dbReference>
<dbReference type="SUPFAM" id="SSF52540">
    <property type="entry name" value="P-loop containing nucleoside triphosphate hydrolases"/>
    <property type="match status" value="1"/>
</dbReference>
<dbReference type="PROSITE" id="PS00113">
    <property type="entry name" value="ADENYLATE_KINASE"/>
    <property type="match status" value="1"/>
</dbReference>
<feature type="chain" id="PRO_1000100554" description="Adenylate kinase">
    <location>
        <begin position="1"/>
        <end position="231"/>
    </location>
</feature>
<feature type="region of interest" description="NMP" evidence="1">
    <location>
        <begin position="32"/>
        <end position="61"/>
    </location>
</feature>
<feature type="region of interest" description="LID" evidence="1">
    <location>
        <begin position="124"/>
        <end position="161"/>
    </location>
</feature>
<feature type="binding site" evidence="1">
    <location>
        <begin position="12"/>
        <end position="17"/>
    </location>
    <ligand>
        <name>ATP</name>
        <dbReference type="ChEBI" id="CHEBI:30616"/>
    </ligand>
</feature>
<feature type="binding site" evidence="1">
    <location>
        <position position="33"/>
    </location>
    <ligand>
        <name>AMP</name>
        <dbReference type="ChEBI" id="CHEBI:456215"/>
    </ligand>
</feature>
<feature type="binding site" evidence="1">
    <location>
        <position position="38"/>
    </location>
    <ligand>
        <name>AMP</name>
        <dbReference type="ChEBI" id="CHEBI:456215"/>
    </ligand>
</feature>
<feature type="binding site" evidence="1">
    <location>
        <begin position="59"/>
        <end position="61"/>
    </location>
    <ligand>
        <name>AMP</name>
        <dbReference type="ChEBI" id="CHEBI:456215"/>
    </ligand>
</feature>
<feature type="binding site" evidence="1">
    <location>
        <begin position="87"/>
        <end position="90"/>
    </location>
    <ligand>
        <name>AMP</name>
        <dbReference type="ChEBI" id="CHEBI:456215"/>
    </ligand>
</feature>
<feature type="binding site" evidence="1">
    <location>
        <position position="94"/>
    </location>
    <ligand>
        <name>AMP</name>
        <dbReference type="ChEBI" id="CHEBI:456215"/>
    </ligand>
</feature>
<feature type="binding site" evidence="1">
    <location>
        <position position="125"/>
    </location>
    <ligand>
        <name>ATP</name>
        <dbReference type="ChEBI" id="CHEBI:30616"/>
    </ligand>
</feature>
<feature type="binding site" evidence="1">
    <location>
        <begin position="134"/>
        <end position="135"/>
    </location>
    <ligand>
        <name>ATP</name>
        <dbReference type="ChEBI" id="CHEBI:30616"/>
    </ligand>
</feature>
<feature type="binding site" evidence="1">
    <location>
        <position position="158"/>
    </location>
    <ligand>
        <name>AMP</name>
        <dbReference type="ChEBI" id="CHEBI:456215"/>
    </ligand>
</feature>
<feature type="binding site" evidence="1">
    <location>
        <position position="169"/>
    </location>
    <ligand>
        <name>AMP</name>
        <dbReference type="ChEBI" id="CHEBI:456215"/>
    </ligand>
</feature>
<feature type="binding site" evidence="1">
    <location>
        <position position="205"/>
    </location>
    <ligand>
        <name>ATP</name>
        <dbReference type="ChEBI" id="CHEBI:30616"/>
    </ligand>
</feature>
<comment type="function">
    <text evidence="1">Catalyzes the reversible transfer of the terminal phosphate group between ATP and AMP. Plays an important role in cellular energy homeostasis and in adenine nucleotide metabolism.</text>
</comment>
<comment type="catalytic activity">
    <reaction evidence="1">
        <text>AMP + ATP = 2 ADP</text>
        <dbReference type="Rhea" id="RHEA:12973"/>
        <dbReference type="ChEBI" id="CHEBI:30616"/>
        <dbReference type="ChEBI" id="CHEBI:456215"/>
        <dbReference type="ChEBI" id="CHEBI:456216"/>
        <dbReference type="EC" id="2.7.4.3"/>
    </reaction>
</comment>
<comment type="pathway">
    <text evidence="1">Purine metabolism; AMP biosynthesis via salvage pathway; AMP from ADP: step 1/1.</text>
</comment>
<comment type="subunit">
    <text evidence="1">Monomer.</text>
</comment>
<comment type="subcellular location">
    <subcellularLocation>
        <location evidence="1">Cytoplasm</location>
    </subcellularLocation>
</comment>
<comment type="domain">
    <text evidence="1">Consists of three domains, a large central CORE domain and two small peripheral domains, NMPbind and LID, which undergo movements during catalysis. The LID domain closes over the site of phosphoryl transfer upon ATP binding. Assembling and dissambling the active center during each catalytic cycle provides an effective means to prevent ATP hydrolysis.</text>
</comment>
<comment type="similarity">
    <text evidence="1">Belongs to the adenylate kinase family.</text>
</comment>
<proteinExistence type="inferred from homology"/>